<keyword id="KW-0963">Cytoplasm</keyword>
<keyword id="KW-0396">Initiation factor</keyword>
<keyword id="KW-0648">Protein biosynthesis</keyword>
<keyword id="KW-0694">RNA-binding</keyword>
<keyword id="KW-0699">rRNA-binding</keyword>
<accession>Q2NTZ7</accession>
<feature type="chain" id="PRO_0000263874" description="Translation initiation factor IF-1">
    <location>
        <begin position="1"/>
        <end position="72"/>
    </location>
</feature>
<feature type="domain" description="S1-like" evidence="1">
    <location>
        <begin position="1"/>
        <end position="72"/>
    </location>
</feature>
<dbReference type="EMBL" id="AP008232">
    <property type="protein sequence ID" value="BAE74378.1"/>
    <property type="molecule type" value="Genomic_DNA"/>
</dbReference>
<dbReference type="RefSeq" id="WP_002211347.1">
    <property type="nucleotide sequence ID" value="NZ_LN854557.1"/>
</dbReference>
<dbReference type="SMR" id="Q2NTZ7"/>
<dbReference type="STRING" id="343509.SG1103"/>
<dbReference type="GeneID" id="98387575"/>
<dbReference type="KEGG" id="sgl:SG1103"/>
<dbReference type="eggNOG" id="COG0361">
    <property type="taxonomic scope" value="Bacteria"/>
</dbReference>
<dbReference type="HOGENOM" id="CLU_151267_1_0_6"/>
<dbReference type="OrthoDB" id="9803250at2"/>
<dbReference type="BioCyc" id="SGLO343509:SGP1_RS09485-MONOMER"/>
<dbReference type="Proteomes" id="UP000001932">
    <property type="component" value="Chromosome"/>
</dbReference>
<dbReference type="GO" id="GO:0005829">
    <property type="term" value="C:cytosol"/>
    <property type="evidence" value="ECO:0007669"/>
    <property type="project" value="TreeGrafter"/>
</dbReference>
<dbReference type="GO" id="GO:0043022">
    <property type="term" value="F:ribosome binding"/>
    <property type="evidence" value="ECO:0007669"/>
    <property type="project" value="UniProtKB-UniRule"/>
</dbReference>
<dbReference type="GO" id="GO:0019843">
    <property type="term" value="F:rRNA binding"/>
    <property type="evidence" value="ECO:0007669"/>
    <property type="project" value="UniProtKB-UniRule"/>
</dbReference>
<dbReference type="GO" id="GO:0003743">
    <property type="term" value="F:translation initiation factor activity"/>
    <property type="evidence" value="ECO:0007669"/>
    <property type="project" value="UniProtKB-UniRule"/>
</dbReference>
<dbReference type="CDD" id="cd04451">
    <property type="entry name" value="S1_IF1"/>
    <property type="match status" value="1"/>
</dbReference>
<dbReference type="FunFam" id="2.40.50.140:FF:000002">
    <property type="entry name" value="Translation initiation factor IF-1"/>
    <property type="match status" value="1"/>
</dbReference>
<dbReference type="Gene3D" id="2.40.50.140">
    <property type="entry name" value="Nucleic acid-binding proteins"/>
    <property type="match status" value="1"/>
</dbReference>
<dbReference type="HAMAP" id="MF_00075">
    <property type="entry name" value="IF_1"/>
    <property type="match status" value="1"/>
</dbReference>
<dbReference type="InterPro" id="IPR012340">
    <property type="entry name" value="NA-bd_OB-fold"/>
</dbReference>
<dbReference type="InterPro" id="IPR006196">
    <property type="entry name" value="RNA-binding_domain_S1_IF1"/>
</dbReference>
<dbReference type="InterPro" id="IPR003029">
    <property type="entry name" value="S1_domain"/>
</dbReference>
<dbReference type="InterPro" id="IPR004368">
    <property type="entry name" value="TIF_IF1"/>
</dbReference>
<dbReference type="NCBIfam" id="TIGR00008">
    <property type="entry name" value="infA"/>
    <property type="match status" value="1"/>
</dbReference>
<dbReference type="PANTHER" id="PTHR33370">
    <property type="entry name" value="TRANSLATION INITIATION FACTOR IF-1, CHLOROPLASTIC"/>
    <property type="match status" value="1"/>
</dbReference>
<dbReference type="PANTHER" id="PTHR33370:SF1">
    <property type="entry name" value="TRANSLATION INITIATION FACTOR IF-1, CHLOROPLASTIC"/>
    <property type="match status" value="1"/>
</dbReference>
<dbReference type="Pfam" id="PF01176">
    <property type="entry name" value="eIF-1a"/>
    <property type="match status" value="1"/>
</dbReference>
<dbReference type="SMART" id="SM00316">
    <property type="entry name" value="S1"/>
    <property type="match status" value="1"/>
</dbReference>
<dbReference type="SUPFAM" id="SSF50249">
    <property type="entry name" value="Nucleic acid-binding proteins"/>
    <property type="match status" value="1"/>
</dbReference>
<dbReference type="PROSITE" id="PS50832">
    <property type="entry name" value="S1_IF1_TYPE"/>
    <property type="match status" value="1"/>
</dbReference>
<organism>
    <name type="scientific">Sodalis glossinidius (strain morsitans)</name>
    <dbReference type="NCBI Taxonomy" id="343509"/>
    <lineage>
        <taxon>Bacteria</taxon>
        <taxon>Pseudomonadati</taxon>
        <taxon>Pseudomonadota</taxon>
        <taxon>Gammaproteobacteria</taxon>
        <taxon>Enterobacterales</taxon>
        <taxon>Bruguierivoracaceae</taxon>
        <taxon>Sodalis</taxon>
    </lineage>
</organism>
<sequence length="72" mass="8236">MAKEDNIEMQGTVLDTLPNTMFRVELENGHVVTAHISGKMRKNYIRILTGDKVTVELTPYDLSKGRIVFRSR</sequence>
<evidence type="ECO:0000255" key="1">
    <source>
        <dbReference type="HAMAP-Rule" id="MF_00075"/>
    </source>
</evidence>
<comment type="function">
    <text evidence="1">One of the essential components for the initiation of protein synthesis. Stabilizes the binding of IF-2 and IF-3 on the 30S subunit to which N-formylmethionyl-tRNA(fMet) subsequently binds. Helps modulate mRNA selection, yielding the 30S pre-initiation complex (PIC). Upon addition of the 50S ribosomal subunit IF-1, IF-2 and IF-3 are released leaving the mature 70S translation initiation complex.</text>
</comment>
<comment type="subunit">
    <text evidence="1">Component of the 30S ribosomal translation pre-initiation complex which assembles on the 30S ribosome in the order IF-2 and IF-3, IF-1 and N-formylmethionyl-tRNA(fMet); mRNA recruitment can occur at any time during PIC assembly.</text>
</comment>
<comment type="subcellular location">
    <subcellularLocation>
        <location evidence="1">Cytoplasm</location>
    </subcellularLocation>
</comment>
<comment type="similarity">
    <text evidence="1">Belongs to the IF-1 family.</text>
</comment>
<name>IF1_SODGM</name>
<reference key="1">
    <citation type="journal article" date="2006" name="Genome Res.">
        <title>Massive genome erosion and functional adaptations provide insights into the symbiotic lifestyle of Sodalis glossinidius in the tsetse host.</title>
        <authorList>
            <person name="Toh H."/>
            <person name="Weiss B.L."/>
            <person name="Perkin S.A.H."/>
            <person name="Yamashita A."/>
            <person name="Oshima K."/>
            <person name="Hattori M."/>
            <person name="Aksoy S."/>
        </authorList>
    </citation>
    <scope>NUCLEOTIDE SEQUENCE [LARGE SCALE GENOMIC DNA]</scope>
    <source>
        <strain>morsitans</strain>
    </source>
</reference>
<protein>
    <recommendedName>
        <fullName evidence="1">Translation initiation factor IF-1</fullName>
    </recommendedName>
</protein>
<gene>
    <name evidence="1" type="primary">infA</name>
    <name type="ordered locus">SG1103</name>
</gene>
<proteinExistence type="inferred from homology"/>